<feature type="chain" id="PRO_0000446555" description="Indole diterpene prenyltransferase nodD1">
    <location>
        <begin position="1"/>
        <end position="431"/>
    </location>
</feature>
<feature type="binding site" evidence="1">
    <location>
        <begin position="85"/>
        <end position="86"/>
    </location>
    <ligand>
        <name>L-tryptophan</name>
        <dbReference type="ChEBI" id="CHEBI:57912"/>
    </ligand>
</feature>
<feature type="binding site" evidence="1">
    <location>
        <position position="107"/>
    </location>
    <ligand>
        <name>substrate</name>
    </ligand>
</feature>
<feature type="binding site" evidence="1">
    <location>
        <position position="194"/>
    </location>
    <ligand>
        <name>substrate</name>
    </ligand>
</feature>
<feature type="binding site" evidence="1">
    <location>
        <position position="268"/>
    </location>
    <ligand>
        <name>substrate</name>
    </ligand>
</feature>
<feature type="binding site" evidence="1">
    <location>
        <position position="270"/>
    </location>
    <ligand>
        <name>substrate</name>
    </ligand>
</feature>
<feature type="binding site" evidence="1">
    <location>
        <position position="272"/>
    </location>
    <ligand>
        <name>substrate</name>
    </ligand>
</feature>
<feature type="binding site" evidence="1">
    <location>
        <position position="353"/>
    </location>
    <ligand>
        <name>substrate</name>
    </ligand>
</feature>
<gene>
    <name evidence="3" type="primary">nodD1</name>
</gene>
<reference key="1">
    <citation type="journal article" date="2018" name="J. Am. Chem. Soc.">
        <title>Heterologous biosynthesis of nodulisporic acid F.</title>
        <authorList>
            <person name="Van de Bittner K.C."/>
            <person name="Nicholson M.J."/>
            <person name="Bustamante L.Y."/>
            <person name="Kessans S.A."/>
            <person name="Ram A."/>
            <person name="van Dolleweerd C.J."/>
            <person name="Scott B."/>
            <person name="Parker E.J."/>
        </authorList>
    </citation>
    <scope>NUCLEOTIDE SEQUENCE [GENOMIC DNA]</scope>
    <scope>IDENTIFICATION</scope>
    <scope>FUNCTION</scope>
    <scope>PATHWAY</scope>
    <source>
        <strain>MF5954 / ATCC 74245</strain>
    </source>
</reference>
<organism>
    <name type="scientific">Hypoxylon pulicicidum</name>
    <dbReference type="NCBI Taxonomy" id="1243767"/>
    <lineage>
        <taxon>Eukaryota</taxon>
        <taxon>Fungi</taxon>
        <taxon>Dikarya</taxon>
        <taxon>Ascomycota</taxon>
        <taxon>Pezizomycotina</taxon>
        <taxon>Sordariomycetes</taxon>
        <taxon>Xylariomycetidae</taxon>
        <taxon>Xylariales</taxon>
        <taxon>Hypoxylaceae</taxon>
        <taxon>Hypoxylon</taxon>
    </lineage>
</organism>
<accession>A0A2I6PIZ7</accession>
<protein>
    <recommendedName>
        <fullName evidence="3">Indole diterpene prenyltransferase nodD1</fullName>
        <ecNumber evidence="5">2.5.1.-</ecNumber>
    </recommendedName>
    <alternativeName>
        <fullName evidence="3">Nodulisporic acid biosynthesis cluster protein D1</fullName>
    </alternativeName>
</protein>
<dbReference type="EC" id="2.5.1.-" evidence="5"/>
<dbReference type="EMBL" id="MG182145">
    <property type="protein sequence ID" value="AUM60056.1"/>
    <property type="molecule type" value="Genomic_DNA"/>
</dbReference>
<dbReference type="SMR" id="A0A2I6PIZ7"/>
<dbReference type="GO" id="GO:0016765">
    <property type="term" value="F:transferase activity, transferring alkyl or aryl (other than methyl) groups"/>
    <property type="evidence" value="ECO:0007669"/>
    <property type="project" value="InterPro"/>
</dbReference>
<dbReference type="GO" id="GO:0009820">
    <property type="term" value="P:alkaloid metabolic process"/>
    <property type="evidence" value="ECO:0007669"/>
    <property type="project" value="InterPro"/>
</dbReference>
<dbReference type="CDD" id="cd13929">
    <property type="entry name" value="PT-DMATS_CymD"/>
    <property type="match status" value="1"/>
</dbReference>
<dbReference type="InterPro" id="IPR017795">
    <property type="entry name" value="Aro_prenylTrfase_DMATS"/>
</dbReference>
<dbReference type="InterPro" id="IPR012148">
    <property type="entry name" value="DMATS-type_fun"/>
</dbReference>
<dbReference type="NCBIfam" id="TIGR03429">
    <property type="entry name" value="arom_pren_DMATS"/>
    <property type="match status" value="1"/>
</dbReference>
<dbReference type="PANTHER" id="PTHR40627">
    <property type="entry name" value="INDOLE PRENYLTRANSFERASE TDIB-RELATED"/>
    <property type="match status" value="1"/>
</dbReference>
<dbReference type="PANTHER" id="PTHR40627:SF3">
    <property type="entry name" value="PRENYLTRANSFERASE ASQH2-RELATED"/>
    <property type="match status" value="1"/>
</dbReference>
<dbReference type="Pfam" id="PF11991">
    <property type="entry name" value="Trp_DMAT"/>
    <property type="match status" value="1"/>
</dbReference>
<dbReference type="PIRSF" id="PIRSF000509">
    <property type="entry name" value="Trp_DMAT"/>
    <property type="match status" value="1"/>
</dbReference>
<comment type="function">
    <text evidence="2 5">Indole diterpene prenyltransferase; part of the gene cluster that mediates the biosynthesis of the indole diterpenes nodulisporic acids (NA). Nodulisporic acid A (NAA) and its chemically modified derivatives are of particular significance because of their highly potent insecticidal activity against blood-feeding arthropods and lack of observable adverse effects on mammals, in particular the tremogenicity associated with the paspaline-derived IDTs is not observed (PubMed:29283570). The geranylgeranyl diphosphate (GGPP) synthase ggs1, localized outside of the cluster, is proposed to catalyze the first step in nodulisporic acid biosynthesis via conversion of farnesyl pyrophosphate and isopentyl pyrophosphate into geranylgeranyl pyrophosphate (GGPP) (PubMed:29283570). Condensation of indole-3-glycerol phosphate with GGPP by the prenyl transferase nodC then forms 3-geranylgeranylindole (3-GGI) (PubMed:29283570). Epoxidation by the FAD-dependent monooxygenase nodM leads to a single-epoxidized-GGI that is substrate of the terpene cyclase nodB for cyclization to yield emindole SB (PubMed:29283570). The terminal methyl carbon, C28, of emindole SB is then oxidized by the cytochrome P450 monooxygenase nodW to produce nodulisporic acid F (NAF), the pentacyclic core of NAA (PubMed:29283570). NAF is converted to nodulisporic acid E (NAE) via prenylation. This step is probably performed by one of the indole diterpene prenyltransferases nodD1 or nodD2 (Probable). Several oxidation steps performed by the FAD-linked oxidoreductase nodO and one of the cytochrome P450 monooxygenase nodR, nodX or nodZ further convert NAE to nodulisporic acid D (NAD) (Probable). NAD is substrate of cytochrome P450 monooxygenase nodJ to produce the precursor of nodulisporic acid C (NAC), converted to NAC by one of the indole diterpene prenyltransferases nodD1 or nodD2 (Probable). The FAD-dependent monooxygenase nodY2 then oxidizes NAC to nodulisporic acid B (NAB) (Probable). Finally NAB is converted to NAA by one of the cytochrome P450 monooxygenases nodR, nodX or nodZ (Probable).</text>
</comment>
<comment type="pathway">
    <text evidence="5">Secondary metabolite biosynthesis.</text>
</comment>
<comment type="similarity">
    <text evidence="4">Belongs to the tryptophan dimethylallyltransferase family.</text>
</comment>
<keyword id="KW-0808">Transferase</keyword>
<name>NODD1_HYPPI</name>
<sequence>MDAASTLTHAPVSQPWQSLAQGLGFVNEHEGYWWSKLGPPLGKMMNWARYSTSEQYRVLAFLYKYLLPACGPKPGDDGELFWKVFISYDYTPIQLSLNFHNGKMTLRTANIPISDKSGTADDPINQQASVDAIIRQERVLPSQDLRWFNHFASQYFFDKDTAASLKTKVDKLRVQQGVQCMLSHDFPERDVQCKVAFCPLWKAVATGLSNKEIIWDSILGLGDDIIPYKRALAVLEQYTSSENAAKAGVRPVFFAFDTVLKDNYKSSRIKIYYLTTRTAFNSMVDIYTLGGLLKGPDIQKGVEALEVLWKAVLNVPEGWPDDKDLPMNPHRCAAVIFNFELWPGAEFPSPKAYLPAHYYGRPDLEIADGMDYFFKQQGLDGVYGSYKENYLKCLSEVRTHRTNSQPSTMIFLFHSKGPMPTLRCTTSPSYL</sequence>
<proteinExistence type="inferred from homology"/>
<evidence type="ECO:0000250" key="1">
    <source>
        <dbReference type="UniProtKB" id="Q50EL0"/>
    </source>
</evidence>
<evidence type="ECO:0000269" key="2">
    <source>
    </source>
</evidence>
<evidence type="ECO:0000303" key="3">
    <source>
    </source>
</evidence>
<evidence type="ECO:0000305" key="4"/>
<evidence type="ECO:0000305" key="5">
    <source>
    </source>
</evidence>